<accession>B1JJU2</accession>
<evidence type="ECO:0000255" key="1">
    <source>
        <dbReference type="HAMAP-Rule" id="MF_01850"/>
    </source>
</evidence>
<evidence type="ECO:0000256" key="2">
    <source>
        <dbReference type="SAM" id="MobiDB-lite"/>
    </source>
</evidence>
<proteinExistence type="inferred from homology"/>
<reference key="1">
    <citation type="submission" date="2008-02" db="EMBL/GenBank/DDBJ databases">
        <title>Complete sequence of Yersinia pseudotuberculosis YPIII.</title>
        <authorList>
            <consortium name="US DOE Joint Genome Institute"/>
            <person name="Copeland A."/>
            <person name="Lucas S."/>
            <person name="Lapidus A."/>
            <person name="Glavina del Rio T."/>
            <person name="Dalin E."/>
            <person name="Tice H."/>
            <person name="Bruce D."/>
            <person name="Goodwin L."/>
            <person name="Pitluck S."/>
            <person name="Munk A.C."/>
            <person name="Brettin T."/>
            <person name="Detter J.C."/>
            <person name="Han C."/>
            <person name="Tapia R."/>
            <person name="Schmutz J."/>
            <person name="Larimer F."/>
            <person name="Land M."/>
            <person name="Hauser L."/>
            <person name="Challacombe J.F."/>
            <person name="Green L."/>
            <person name="Lindler L.E."/>
            <person name="Nikolich M.P."/>
            <person name="Richardson P."/>
        </authorList>
    </citation>
    <scope>NUCLEOTIDE SEQUENCE [LARGE SCALE GENOMIC DNA]</scope>
    <source>
        <strain>YPIII</strain>
    </source>
</reference>
<dbReference type="EC" id="2.8.1.-" evidence="1"/>
<dbReference type="EMBL" id="CP000950">
    <property type="protein sequence ID" value="ACA68203.1"/>
    <property type="molecule type" value="Genomic_DNA"/>
</dbReference>
<dbReference type="RefSeq" id="WP_002210992.1">
    <property type="nucleotide sequence ID" value="NZ_CP009792.1"/>
</dbReference>
<dbReference type="SMR" id="B1JJU2"/>
<dbReference type="GeneID" id="57976339"/>
<dbReference type="KEGG" id="ypy:YPK_1912"/>
<dbReference type="PATRIC" id="fig|502800.11.peg.2582"/>
<dbReference type="GO" id="GO:0005737">
    <property type="term" value="C:cytoplasm"/>
    <property type="evidence" value="ECO:0007669"/>
    <property type="project" value="UniProtKB-SubCell"/>
</dbReference>
<dbReference type="GO" id="GO:0051539">
    <property type="term" value="F:4 iron, 4 sulfur cluster binding"/>
    <property type="evidence" value="ECO:0007669"/>
    <property type="project" value="UniProtKB-UniRule"/>
</dbReference>
<dbReference type="GO" id="GO:0005524">
    <property type="term" value="F:ATP binding"/>
    <property type="evidence" value="ECO:0007669"/>
    <property type="project" value="UniProtKB-UniRule"/>
</dbReference>
<dbReference type="GO" id="GO:0000287">
    <property type="term" value="F:magnesium ion binding"/>
    <property type="evidence" value="ECO:0007669"/>
    <property type="project" value="UniProtKB-UniRule"/>
</dbReference>
<dbReference type="GO" id="GO:0016783">
    <property type="term" value="F:sulfurtransferase activity"/>
    <property type="evidence" value="ECO:0007669"/>
    <property type="project" value="UniProtKB-UniRule"/>
</dbReference>
<dbReference type="GO" id="GO:0000049">
    <property type="term" value="F:tRNA binding"/>
    <property type="evidence" value="ECO:0007669"/>
    <property type="project" value="UniProtKB-KW"/>
</dbReference>
<dbReference type="GO" id="GO:0034227">
    <property type="term" value="P:tRNA thio-modification"/>
    <property type="evidence" value="ECO:0007669"/>
    <property type="project" value="UniProtKB-UniRule"/>
</dbReference>
<dbReference type="CDD" id="cd24138">
    <property type="entry name" value="TtcA-like"/>
    <property type="match status" value="1"/>
</dbReference>
<dbReference type="Gene3D" id="3.40.50.620">
    <property type="entry name" value="HUPs"/>
    <property type="match status" value="1"/>
</dbReference>
<dbReference type="HAMAP" id="MF_01850">
    <property type="entry name" value="TtcA"/>
    <property type="match status" value="1"/>
</dbReference>
<dbReference type="InterPro" id="IPR014729">
    <property type="entry name" value="Rossmann-like_a/b/a_fold"/>
</dbReference>
<dbReference type="InterPro" id="IPR011063">
    <property type="entry name" value="TilS/TtcA_N"/>
</dbReference>
<dbReference type="InterPro" id="IPR012089">
    <property type="entry name" value="tRNA_Cyd_32_2_STrfase"/>
</dbReference>
<dbReference type="InterPro" id="IPR035107">
    <property type="entry name" value="tRNA_thiolation_TtcA_Ctu1"/>
</dbReference>
<dbReference type="NCBIfam" id="NF007972">
    <property type="entry name" value="PRK10696.1"/>
    <property type="match status" value="1"/>
</dbReference>
<dbReference type="PANTHER" id="PTHR43686:SF1">
    <property type="entry name" value="AMINOTRAN_5 DOMAIN-CONTAINING PROTEIN"/>
    <property type="match status" value="1"/>
</dbReference>
<dbReference type="PANTHER" id="PTHR43686">
    <property type="entry name" value="SULFURTRANSFERASE-RELATED"/>
    <property type="match status" value="1"/>
</dbReference>
<dbReference type="Pfam" id="PF01171">
    <property type="entry name" value="ATP_bind_3"/>
    <property type="match status" value="1"/>
</dbReference>
<dbReference type="PIRSF" id="PIRSF004976">
    <property type="entry name" value="ATPase_YdaO"/>
    <property type="match status" value="1"/>
</dbReference>
<dbReference type="SUPFAM" id="SSF52402">
    <property type="entry name" value="Adenine nucleotide alpha hydrolases-like"/>
    <property type="match status" value="1"/>
</dbReference>
<comment type="function">
    <text evidence="1">Catalyzes the ATP-dependent 2-thiolation of cytidine in position 32 of tRNA, to form 2-thiocytidine (s(2)C32). The sulfur atoms are provided by the cysteine/cysteine desulfurase (IscS) system.</text>
</comment>
<comment type="catalytic activity">
    <reaction evidence="1">
        <text>cytidine(32) in tRNA + S-sulfanyl-L-cysteinyl-[cysteine desulfurase] + AH2 + ATP = 2-thiocytidine(32) in tRNA + L-cysteinyl-[cysteine desulfurase] + A + AMP + diphosphate + H(+)</text>
        <dbReference type="Rhea" id="RHEA:57048"/>
        <dbReference type="Rhea" id="RHEA-COMP:10288"/>
        <dbReference type="Rhea" id="RHEA-COMP:12157"/>
        <dbReference type="Rhea" id="RHEA-COMP:12158"/>
        <dbReference type="Rhea" id="RHEA-COMP:14821"/>
        <dbReference type="ChEBI" id="CHEBI:13193"/>
        <dbReference type="ChEBI" id="CHEBI:15378"/>
        <dbReference type="ChEBI" id="CHEBI:17499"/>
        <dbReference type="ChEBI" id="CHEBI:29950"/>
        <dbReference type="ChEBI" id="CHEBI:30616"/>
        <dbReference type="ChEBI" id="CHEBI:33019"/>
        <dbReference type="ChEBI" id="CHEBI:61963"/>
        <dbReference type="ChEBI" id="CHEBI:82748"/>
        <dbReference type="ChEBI" id="CHEBI:141453"/>
        <dbReference type="ChEBI" id="CHEBI:456215"/>
    </reaction>
    <physiologicalReaction direction="left-to-right" evidence="1">
        <dbReference type="Rhea" id="RHEA:57049"/>
    </physiologicalReaction>
</comment>
<comment type="cofactor">
    <cofactor evidence="1">
        <name>Mg(2+)</name>
        <dbReference type="ChEBI" id="CHEBI:18420"/>
    </cofactor>
</comment>
<comment type="cofactor">
    <cofactor evidence="1">
        <name>[4Fe-4S] cluster</name>
        <dbReference type="ChEBI" id="CHEBI:49883"/>
    </cofactor>
    <text evidence="1">Binds 1 [4Fe-4S] cluster per subunit. The cluster is chelated by three Cys residues, the fourth Fe has a free coordination site that may bind a sulfur atom transferred from the persulfide of IscS.</text>
</comment>
<comment type="pathway">
    <text evidence="1">tRNA modification.</text>
</comment>
<comment type="subunit">
    <text evidence="1">Homodimer.</text>
</comment>
<comment type="subcellular location">
    <subcellularLocation>
        <location evidence="1">Cytoplasm</location>
    </subcellularLocation>
</comment>
<comment type="miscellaneous">
    <text evidence="1">The thiolation reaction likely consists of two steps: a first activation step by ATP to form an adenylated intermediate of the target base of tRNA, and a second nucleophilic substitution step of the sulfur (S) atom supplied by the hydrosulfide attached to the Fe-S cluster.</text>
</comment>
<comment type="similarity">
    <text evidence="1">Belongs to the TtcA family.</text>
</comment>
<feature type="chain" id="PRO_0000348889" description="tRNA-cytidine(32) 2-sulfurtransferase">
    <location>
        <begin position="1"/>
        <end position="313"/>
    </location>
</feature>
<feature type="region of interest" description="Disordered" evidence="2">
    <location>
        <begin position="288"/>
        <end position="313"/>
    </location>
</feature>
<feature type="short sequence motif" description="PP-loop motif" evidence="1">
    <location>
        <begin position="47"/>
        <end position="52"/>
    </location>
</feature>
<feature type="compositionally biased region" description="Basic and acidic residues" evidence="2">
    <location>
        <begin position="299"/>
        <end position="313"/>
    </location>
</feature>
<feature type="binding site" evidence="1">
    <location>
        <position position="122"/>
    </location>
    <ligand>
        <name>[4Fe-4S] cluster</name>
        <dbReference type="ChEBI" id="CHEBI:49883"/>
    </ligand>
</feature>
<feature type="binding site" evidence="1">
    <location>
        <position position="125"/>
    </location>
    <ligand>
        <name>[4Fe-4S] cluster</name>
        <dbReference type="ChEBI" id="CHEBI:49883"/>
    </ligand>
</feature>
<feature type="binding site" evidence="1">
    <location>
        <position position="213"/>
    </location>
    <ligand>
        <name>[4Fe-4S] cluster</name>
        <dbReference type="ChEBI" id="CHEBI:49883"/>
    </ligand>
</feature>
<keyword id="KW-0004">4Fe-4S</keyword>
<keyword id="KW-0067">ATP-binding</keyword>
<keyword id="KW-0963">Cytoplasm</keyword>
<keyword id="KW-0408">Iron</keyword>
<keyword id="KW-0411">Iron-sulfur</keyword>
<keyword id="KW-0460">Magnesium</keyword>
<keyword id="KW-0479">Metal-binding</keyword>
<keyword id="KW-0547">Nucleotide-binding</keyword>
<keyword id="KW-0694">RNA-binding</keyword>
<keyword id="KW-0808">Transferase</keyword>
<keyword id="KW-0819">tRNA processing</keyword>
<keyword id="KW-0820">tRNA-binding</keyword>
<sequence length="313" mass="35799">MLEKQSVNQKEQYNFNKLQKRLRRNVGQAIADFNMIEEGDRVMVCLSGGKDSYTMLDILQSLQKSAPINFSLIAVNLDQKQPGFPEDILPAYLDKQGVEYKIVEENTYGIVKEIIPEGKTTCSLCSRLRRGILYRTATELGATKIALGHHRDDILQTLFLNMFYGGKLKGMPPKLMSDDGKHIVIRPLAYCREKDIERFAVAREYPIIPCNLCGSQPNLQRQVIKDMLRDWDKQYPGRIETMFSAMQNVVPSHLNDHKLFDFKSITHDSDIIDGGDLAFDREALPLNPVGWQPEDDEDTEKRPPVRLDVLEIK</sequence>
<gene>
    <name evidence="1" type="primary">ttcA</name>
    <name type="ordered locus">YPK_1912</name>
</gene>
<protein>
    <recommendedName>
        <fullName evidence="1">tRNA-cytidine(32) 2-sulfurtransferase</fullName>
        <ecNumber evidence="1">2.8.1.-</ecNumber>
    </recommendedName>
    <alternativeName>
        <fullName evidence="1">Two-thiocytidine biosynthesis protein A</fullName>
    </alternativeName>
    <alternativeName>
        <fullName evidence="1">tRNA 2-thiocytidine biosynthesis protein TtcA</fullName>
    </alternativeName>
</protein>
<organism>
    <name type="scientific">Yersinia pseudotuberculosis serotype O:3 (strain YPIII)</name>
    <dbReference type="NCBI Taxonomy" id="502800"/>
    <lineage>
        <taxon>Bacteria</taxon>
        <taxon>Pseudomonadati</taxon>
        <taxon>Pseudomonadota</taxon>
        <taxon>Gammaproteobacteria</taxon>
        <taxon>Enterobacterales</taxon>
        <taxon>Yersiniaceae</taxon>
        <taxon>Yersinia</taxon>
    </lineage>
</organism>
<name>TTCA_YERPY</name>